<feature type="chain" id="PRO_0000184751" description="Pyrrolidone-carboxylate peptidase">
    <location>
        <begin position="1"/>
        <end position="212"/>
    </location>
</feature>
<feature type="active site" evidence="1">
    <location>
        <position position="80"/>
    </location>
</feature>
<feature type="active site" evidence="1">
    <location>
        <position position="143"/>
    </location>
</feature>
<feature type="active site" evidence="1">
    <location>
        <position position="165"/>
    </location>
</feature>
<proteinExistence type="inferred from homology"/>
<reference key="1">
    <citation type="journal article" date="2003" name="Genome Res.">
        <title>Comparative genome analysis of Vibrio vulnificus, a marine pathogen.</title>
        <authorList>
            <person name="Chen C.-Y."/>
            <person name="Wu K.-M."/>
            <person name="Chang Y.-C."/>
            <person name="Chang C.-H."/>
            <person name="Tsai H.-C."/>
            <person name="Liao T.-L."/>
            <person name="Liu Y.-M."/>
            <person name="Chen H.-J."/>
            <person name="Shen A.B.-T."/>
            <person name="Li J.-C."/>
            <person name="Su T.-L."/>
            <person name="Shao C.-P."/>
            <person name="Lee C.-T."/>
            <person name="Hor L.-I."/>
            <person name="Tsai S.-F."/>
        </authorList>
    </citation>
    <scope>NUCLEOTIDE SEQUENCE [LARGE SCALE GENOMIC DNA]</scope>
    <source>
        <strain>YJ016</strain>
    </source>
</reference>
<keyword id="KW-0963">Cytoplasm</keyword>
<keyword id="KW-0378">Hydrolase</keyword>
<keyword id="KW-0645">Protease</keyword>
<keyword id="KW-0788">Thiol protease</keyword>
<comment type="function">
    <text evidence="1">Removes 5-oxoproline from various penultimate amino acid residues except L-proline.</text>
</comment>
<comment type="catalytic activity">
    <reaction evidence="1">
        <text>Release of an N-terminal pyroglutamyl group from a polypeptide, the second amino acid generally not being Pro.</text>
        <dbReference type="EC" id="3.4.19.3"/>
    </reaction>
</comment>
<comment type="subunit">
    <text evidence="1">Homotetramer.</text>
</comment>
<comment type="subcellular location">
    <subcellularLocation>
        <location evidence="1">Cytoplasm</location>
    </subcellularLocation>
</comment>
<comment type="similarity">
    <text evidence="1">Belongs to the peptidase C15 family.</text>
</comment>
<accession>Q7MG84</accession>
<name>PCP_VIBVY</name>
<evidence type="ECO:0000255" key="1">
    <source>
        <dbReference type="HAMAP-Rule" id="MF_00417"/>
    </source>
</evidence>
<sequence length="212" mass="23084">MRKVLLTGFEPFGGESINPSLELVKQMASRALPQVEIIGCEVPVVRYQAIETVLQAVETHQPDLVLMIGQASGRCAITPERVAINLDDYRIEDNAGHQPVDEPIIATGPAAYFSTLPVKAITHALQQAGIPCQISHSAGTFVCNHLFYGVQHHLHTRAIRSGFIHIPLLPEQASASNQPSMSLETLVHGLEMMMITCLETEQDTKHTGGTIC</sequence>
<organism>
    <name type="scientific">Vibrio vulnificus (strain YJ016)</name>
    <dbReference type="NCBI Taxonomy" id="196600"/>
    <lineage>
        <taxon>Bacteria</taxon>
        <taxon>Pseudomonadati</taxon>
        <taxon>Pseudomonadota</taxon>
        <taxon>Gammaproteobacteria</taxon>
        <taxon>Vibrionales</taxon>
        <taxon>Vibrionaceae</taxon>
        <taxon>Vibrio</taxon>
    </lineage>
</organism>
<protein>
    <recommendedName>
        <fullName evidence="1">Pyrrolidone-carboxylate peptidase</fullName>
        <ecNumber evidence="1">3.4.19.3</ecNumber>
    </recommendedName>
    <alternativeName>
        <fullName evidence="1">5-oxoprolyl-peptidase</fullName>
    </alternativeName>
    <alternativeName>
        <fullName evidence="1">Pyroglutamyl-peptidase I</fullName>
        <shortName evidence="1">PGP-I</shortName>
        <shortName evidence="1">Pyrase</shortName>
    </alternativeName>
</protein>
<dbReference type="EC" id="3.4.19.3" evidence="1"/>
<dbReference type="EMBL" id="BA000038">
    <property type="protein sequence ID" value="BAC96111.1"/>
    <property type="molecule type" value="Genomic_DNA"/>
</dbReference>
<dbReference type="RefSeq" id="WP_011151515.1">
    <property type="nucleotide sequence ID" value="NC_005140.1"/>
</dbReference>
<dbReference type="SMR" id="Q7MG84"/>
<dbReference type="STRING" id="672.VV93_v1c30980"/>
<dbReference type="MEROPS" id="C15.001"/>
<dbReference type="KEGG" id="vvy:VVA0085"/>
<dbReference type="PATRIC" id="fig|196600.6.peg.3306"/>
<dbReference type="eggNOG" id="COG2039">
    <property type="taxonomic scope" value="Bacteria"/>
</dbReference>
<dbReference type="HOGENOM" id="CLU_043960_4_0_6"/>
<dbReference type="Proteomes" id="UP000002675">
    <property type="component" value="Chromosome II"/>
</dbReference>
<dbReference type="GO" id="GO:0005829">
    <property type="term" value="C:cytosol"/>
    <property type="evidence" value="ECO:0007669"/>
    <property type="project" value="InterPro"/>
</dbReference>
<dbReference type="GO" id="GO:0016920">
    <property type="term" value="F:pyroglutamyl-peptidase activity"/>
    <property type="evidence" value="ECO:0007669"/>
    <property type="project" value="UniProtKB-UniRule"/>
</dbReference>
<dbReference type="GO" id="GO:0006508">
    <property type="term" value="P:proteolysis"/>
    <property type="evidence" value="ECO:0007669"/>
    <property type="project" value="UniProtKB-KW"/>
</dbReference>
<dbReference type="CDD" id="cd00501">
    <property type="entry name" value="Peptidase_C15"/>
    <property type="match status" value="1"/>
</dbReference>
<dbReference type="FunFam" id="3.40.630.20:FF:000001">
    <property type="entry name" value="Pyrrolidone-carboxylate peptidase"/>
    <property type="match status" value="1"/>
</dbReference>
<dbReference type="Gene3D" id="3.40.630.20">
    <property type="entry name" value="Peptidase C15, pyroglutamyl peptidase I-like"/>
    <property type="match status" value="1"/>
</dbReference>
<dbReference type="HAMAP" id="MF_00417">
    <property type="entry name" value="Pyrrolid_peptidase"/>
    <property type="match status" value="1"/>
</dbReference>
<dbReference type="InterPro" id="IPR000816">
    <property type="entry name" value="Peptidase_C15"/>
</dbReference>
<dbReference type="InterPro" id="IPR016125">
    <property type="entry name" value="Peptidase_C15-like"/>
</dbReference>
<dbReference type="InterPro" id="IPR036440">
    <property type="entry name" value="Peptidase_C15-like_sf"/>
</dbReference>
<dbReference type="InterPro" id="IPR029762">
    <property type="entry name" value="PGP-I_bact-type"/>
</dbReference>
<dbReference type="InterPro" id="IPR033694">
    <property type="entry name" value="PGPEP1_Cys_AS"/>
</dbReference>
<dbReference type="NCBIfam" id="NF009676">
    <property type="entry name" value="PRK13197.1"/>
    <property type="match status" value="1"/>
</dbReference>
<dbReference type="NCBIfam" id="TIGR00504">
    <property type="entry name" value="pyro_pdase"/>
    <property type="match status" value="1"/>
</dbReference>
<dbReference type="PANTHER" id="PTHR23402">
    <property type="entry name" value="PROTEASE FAMILY C15 PYROGLUTAMYL-PEPTIDASE I-RELATED"/>
    <property type="match status" value="1"/>
</dbReference>
<dbReference type="PANTHER" id="PTHR23402:SF1">
    <property type="entry name" value="PYROGLUTAMYL-PEPTIDASE I"/>
    <property type="match status" value="1"/>
</dbReference>
<dbReference type="Pfam" id="PF01470">
    <property type="entry name" value="Peptidase_C15"/>
    <property type="match status" value="1"/>
</dbReference>
<dbReference type="PIRSF" id="PIRSF015592">
    <property type="entry name" value="Prld-crbxl_pptds"/>
    <property type="match status" value="1"/>
</dbReference>
<dbReference type="PRINTS" id="PR00706">
    <property type="entry name" value="PYROGLUPTASE"/>
</dbReference>
<dbReference type="SUPFAM" id="SSF53182">
    <property type="entry name" value="Pyrrolidone carboxyl peptidase (pyroglutamate aminopeptidase)"/>
    <property type="match status" value="1"/>
</dbReference>
<dbReference type="PROSITE" id="PS01334">
    <property type="entry name" value="PYRASE_CYS"/>
    <property type="match status" value="1"/>
</dbReference>
<gene>
    <name evidence="1" type="primary">pcp</name>
    <name type="ordered locus">VVA0085</name>
</gene>